<keyword id="KW-0507">mRNA processing</keyword>
<keyword id="KW-0539">Nucleus</keyword>
<keyword id="KW-1185">Reference proteome</keyword>
<evidence type="ECO:0000250" key="1"/>
<evidence type="ECO:0000256" key="2">
    <source>
        <dbReference type="SAM" id="MobiDB-lite"/>
    </source>
</evidence>
<evidence type="ECO:0000305" key="3"/>
<organism>
    <name type="scientific">Yarrowia lipolytica (strain CLIB 122 / E 150)</name>
    <name type="common">Yeast</name>
    <name type="synonym">Candida lipolytica</name>
    <dbReference type="NCBI Taxonomy" id="284591"/>
    <lineage>
        <taxon>Eukaryota</taxon>
        <taxon>Fungi</taxon>
        <taxon>Dikarya</taxon>
        <taxon>Ascomycota</taxon>
        <taxon>Saccharomycotina</taxon>
        <taxon>Dipodascomycetes</taxon>
        <taxon>Dipodascales</taxon>
        <taxon>Dipodascales incertae sedis</taxon>
        <taxon>Yarrowia</taxon>
    </lineage>
</organism>
<comment type="function">
    <text evidence="1">Pre-mRNA polyadenylation factor that directly interacts with poly(A) polymerase.</text>
</comment>
<comment type="subcellular location">
    <subcellularLocation>
        <location evidence="1">Nucleus</location>
    </subcellularLocation>
</comment>
<comment type="similarity">
    <text evidence="3">Belongs to the FIP1 family.</text>
</comment>
<name>FIP1_YARLI</name>
<sequence>MDDDDDFLYGTEEPAVKRARVEPEGAEDDEEPHSQTTKQQEPEDDSDSEYESDDSDIDIVIDTGAPSKLASTASAAAKKEAPAASSAAPEASDTPKEESASEERPQPAAKMPGIDIEKVGMLDGKPITEHNLEDFEDKPWRMPGADITDYFNYGFDEFTWMAYCDKQNQIRGEYNPQNMMAMMGMSMMGMPGMPGGGQMPMPGGEGMPDMFKMMQGMNPPK</sequence>
<feature type="chain" id="PRO_0000238516" description="Pre-mRNA polyadenylation factor FIP1">
    <location>
        <begin position="1"/>
        <end position="221"/>
    </location>
</feature>
<feature type="region of interest" description="Disordered" evidence="2">
    <location>
        <begin position="1"/>
        <end position="114"/>
    </location>
</feature>
<feature type="compositionally biased region" description="Basic and acidic residues" evidence="2">
    <location>
        <begin position="14"/>
        <end position="23"/>
    </location>
</feature>
<feature type="compositionally biased region" description="Acidic residues" evidence="2">
    <location>
        <begin position="42"/>
        <end position="59"/>
    </location>
</feature>
<feature type="compositionally biased region" description="Low complexity" evidence="2">
    <location>
        <begin position="60"/>
        <end position="92"/>
    </location>
</feature>
<feature type="compositionally biased region" description="Basic and acidic residues" evidence="2">
    <location>
        <begin position="93"/>
        <end position="105"/>
    </location>
</feature>
<reference key="1">
    <citation type="journal article" date="2004" name="Nature">
        <title>Genome evolution in yeasts.</title>
        <authorList>
            <person name="Dujon B."/>
            <person name="Sherman D."/>
            <person name="Fischer G."/>
            <person name="Durrens P."/>
            <person name="Casaregola S."/>
            <person name="Lafontaine I."/>
            <person name="de Montigny J."/>
            <person name="Marck C."/>
            <person name="Neuveglise C."/>
            <person name="Talla E."/>
            <person name="Goffard N."/>
            <person name="Frangeul L."/>
            <person name="Aigle M."/>
            <person name="Anthouard V."/>
            <person name="Babour A."/>
            <person name="Barbe V."/>
            <person name="Barnay S."/>
            <person name="Blanchin S."/>
            <person name="Beckerich J.-M."/>
            <person name="Beyne E."/>
            <person name="Bleykasten C."/>
            <person name="Boisrame A."/>
            <person name="Boyer J."/>
            <person name="Cattolico L."/>
            <person name="Confanioleri F."/>
            <person name="de Daruvar A."/>
            <person name="Despons L."/>
            <person name="Fabre E."/>
            <person name="Fairhead C."/>
            <person name="Ferry-Dumazet H."/>
            <person name="Groppi A."/>
            <person name="Hantraye F."/>
            <person name="Hennequin C."/>
            <person name="Jauniaux N."/>
            <person name="Joyet P."/>
            <person name="Kachouri R."/>
            <person name="Kerrest A."/>
            <person name="Koszul R."/>
            <person name="Lemaire M."/>
            <person name="Lesur I."/>
            <person name="Ma L."/>
            <person name="Muller H."/>
            <person name="Nicaud J.-M."/>
            <person name="Nikolski M."/>
            <person name="Oztas S."/>
            <person name="Ozier-Kalogeropoulos O."/>
            <person name="Pellenz S."/>
            <person name="Potier S."/>
            <person name="Richard G.-F."/>
            <person name="Straub M.-L."/>
            <person name="Suleau A."/>
            <person name="Swennen D."/>
            <person name="Tekaia F."/>
            <person name="Wesolowski-Louvel M."/>
            <person name="Westhof E."/>
            <person name="Wirth B."/>
            <person name="Zeniou-Meyer M."/>
            <person name="Zivanovic Y."/>
            <person name="Bolotin-Fukuhara M."/>
            <person name="Thierry A."/>
            <person name="Bouchier C."/>
            <person name="Caudron B."/>
            <person name="Scarpelli C."/>
            <person name="Gaillardin C."/>
            <person name="Weissenbach J."/>
            <person name="Wincker P."/>
            <person name="Souciet J.-L."/>
        </authorList>
    </citation>
    <scope>NUCLEOTIDE SEQUENCE [LARGE SCALE GENOMIC DNA]</scope>
    <source>
        <strain>CLIB 122 / E 150</strain>
    </source>
</reference>
<dbReference type="EMBL" id="CR382131">
    <property type="protein sequence ID" value="CAG79057.1"/>
    <property type="molecule type" value="Genomic_DNA"/>
</dbReference>
<dbReference type="RefSeq" id="XP_503478.1">
    <property type="nucleotide sequence ID" value="XM_503478.1"/>
</dbReference>
<dbReference type="SMR" id="Q6C784"/>
<dbReference type="STRING" id="284591.Q6C784"/>
<dbReference type="EnsemblFungi" id="CAG79057">
    <property type="protein sequence ID" value="CAG79057"/>
    <property type="gene ID" value="YALI0_E02882g"/>
</dbReference>
<dbReference type="KEGG" id="yli:2912124"/>
<dbReference type="VEuPathDB" id="FungiDB:YALI0_E02882g"/>
<dbReference type="HOGENOM" id="CLU_039307_2_0_1"/>
<dbReference type="InParanoid" id="Q6C784"/>
<dbReference type="OMA" id="FDEFTWE"/>
<dbReference type="OrthoDB" id="11625at4891"/>
<dbReference type="Proteomes" id="UP000001300">
    <property type="component" value="Chromosome E"/>
</dbReference>
<dbReference type="GO" id="GO:0005634">
    <property type="term" value="C:nucleus"/>
    <property type="evidence" value="ECO:0007669"/>
    <property type="project" value="UniProtKB-SubCell"/>
</dbReference>
<dbReference type="GO" id="GO:0006397">
    <property type="term" value="P:mRNA processing"/>
    <property type="evidence" value="ECO:0007669"/>
    <property type="project" value="UniProtKB-KW"/>
</dbReference>
<dbReference type="InterPro" id="IPR007854">
    <property type="entry name" value="Fip1_dom"/>
</dbReference>
<dbReference type="InterPro" id="IPR051187">
    <property type="entry name" value="Pre-mRNA_3'-end_processing_reg"/>
</dbReference>
<dbReference type="PANTHER" id="PTHR13484">
    <property type="entry name" value="FIP1-LIKE 1 PROTEIN"/>
    <property type="match status" value="1"/>
</dbReference>
<dbReference type="PANTHER" id="PTHR13484:SF0">
    <property type="entry name" value="PRE-MRNA 3'-END-PROCESSING FACTOR FIP1"/>
    <property type="match status" value="1"/>
</dbReference>
<dbReference type="Pfam" id="PF05182">
    <property type="entry name" value="Fip1"/>
    <property type="match status" value="1"/>
</dbReference>
<gene>
    <name type="primary">FIP1</name>
    <name type="ordered locus">YALI0E02882g</name>
</gene>
<protein>
    <recommendedName>
        <fullName>Pre-mRNA polyadenylation factor FIP1</fullName>
    </recommendedName>
</protein>
<accession>Q6C784</accession>
<proteinExistence type="inferred from homology"/>